<sequence length="105" mass="12138">MSVYFPIHCSDYLRSAEMTEVMMNAPSMEEIGLSPRKDGLSYQIFPDPSDFDRCCKLKDRLPSIVVEPTEGEVESGELRWPPEEFLVQEDEQDNCEETTNEKKDQ</sequence>
<accession>Q9CX60</accession>
<accession>Q99MQ2</accession>
<name>LBH_MOUSE</name>
<reference key="1">
    <citation type="journal article" date="2001" name="Dev. Biol.">
        <title>Identification and characterization of Lbh, a novel conserved nuclear protein expressed during early limb and heart development.</title>
        <authorList>
            <person name="Briegel K.J."/>
            <person name="Joyner A.L."/>
        </authorList>
    </citation>
    <scope>NUCLEOTIDE SEQUENCE [MRNA]</scope>
    <scope>FUNCTION</scope>
    <scope>SUBCELLULAR LOCATION</scope>
    <scope>TISSUE SPECIFICITY</scope>
    <scope>DEVELOPMENTAL STAGE</scope>
    <source>
        <strain>Swiss Webster / NIH</strain>
        <tissue>Embryo</tissue>
    </source>
</reference>
<reference key="2">
    <citation type="journal article" date="2005" name="Science">
        <title>The transcriptional landscape of the mammalian genome.</title>
        <authorList>
            <person name="Carninci P."/>
            <person name="Kasukawa T."/>
            <person name="Katayama S."/>
            <person name="Gough J."/>
            <person name="Frith M.C."/>
            <person name="Maeda N."/>
            <person name="Oyama R."/>
            <person name="Ravasi T."/>
            <person name="Lenhard B."/>
            <person name="Wells C."/>
            <person name="Kodzius R."/>
            <person name="Shimokawa K."/>
            <person name="Bajic V.B."/>
            <person name="Brenner S.E."/>
            <person name="Batalov S."/>
            <person name="Forrest A.R."/>
            <person name="Zavolan M."/>
            <person name="Davis M.J."/>
            <person name="Wilming L.G."/>
            <person name="Aidinis V."/>
            <person name="Allen J.E."/>
            <person name="Ambesi-Impiombato A."/>
            <person name="Apweiler R."/>
            <person name="Aturaliya R.N."/>
            <person name="Bailey T.L."/>
            <person name="Bansal M."/>
            <person name="Baxter L."/>
            <person name="Beisel K.W."/>
            <person name="Bersano T."/>
            <person name="Bono H."/>
            <person name="Chalk A.M."/>
            <person name="Chiu K.P."/>
            <person name="Choudhary V."/>
            <person name="Christoffels A."/>
            <person name="Clutterbuck D.R."/>
            <person name="Crowe M.L."/>
            <person name="Dalla E."/>
            <person name="Dalrymple B.P."/>
            <person name="de Bono B."/>
            <person name="Della Gatta G."/>
            <person name="di Bernardo D."/>
            <person name="Down T."/>
            <person name="Engstrom P."/>
            <person name="Fagiolini M."/>
            <person name="Faulkner G."/>
            <person name="Fletcher C.F."/>
            <person name="Fukushima T."/>
            <person name="Furuno M."/>
            <person name="Futaki S."/>
            <person name="Gariboldi M."/>
            <person name="Georgii-Hemming P."/>
            <person name="Gingeras T.R."/>
            <person name="Gojobori T."/>
            <person name="Green R.E."/>
            <person name="Gustincich S."/>
            <person name="Harbers M."/>
            <person name="Hayashi Y."/>
            <person name="Hensch T.K."/>
            <person name="Hirokawa N."/>
            <person name="Hill D."/>
            <person name="Huminiecki L."/>
            <person name="Iacono M."/>
            <person name="Ikeo K."/>
            <person name="Iwama A."/>
            <person name="Ishikawa T."/>
            <person name="Jakt M."/>
            <person name="Kanapin A."/>
            <person name="Katoh M."/>
            <person name="Kawasawa Y."/>
            <person name="Kelso J."/>
            <person name="Kitamura H."/>
            <person name="Kitano H."/>
            <person name="Kollias G."/>
            <person name="Krishnan S.P."/>
            <person name="Kruger A."/>
            <person name="Kummerfeld S.K."/>
            <person name="Kurochkin I.V."/>
            <person name="Lareau L.F."/>
            <person name="Lazarevic D."/>
            <person name="Lipovich L."/>
            <person name="Liu J."/>
            <person name="Liuni S."/>
            <person name="McWilliam S."/>
            <person name="Madan Babu M."/>
            <person name="Madera M."/>
            <person name="Marchionni L."/>
            <person name="Matsuda H."/>
            <person name="Matsuzawa S."/>
            <person name="Miki H."/>
            <person name="Mignone F."/>
            <person name="Miyake S."/>
            <person name="Morris K."/>
            <person name="Mottagui-Tabar S."/>
            <person name="Mulder N."/>
            <person name="Nakano N."/>
            <person name="Nakauchi H."/>
            <person name="Ng P."/>
            <person name="Nilsson R."/>
            <person name="Nishiguchi S."/>
            <person name="Nishikawa S."/>
            <person name="Nori F."/>
            <person name="Ohara O."/>
            <person name="Okazaki Y."/>
            <person name="Orlando V."/>
            <person name="Pang K.C."/>
            <person name="Pavan W.J."/>
            <person name="Pavesi G."/>
            <person name="Pesole G."/>
            <person name="Petrovsky N."/>
            <person name="Piazza S."/>
            <person name="Reed J."/>
            <person name="Reid J.F."/>
            <person name="Ring B.Z."/>
            <person name="Ringwald M."/>
            <person name="Rost B."/>
            <person name="Ruan Y."/>
            <person name="Salzberg S.L."/>
            <person name="Sandelin A."/>
            <person name="Schneider C."/>
            <person name="Schoenbach C."/>
            <person name="Sekiguchi K."/>
            <person name="Semple C.A."/>
            <person name="Seno S."/>
            <person name="Sessa L."/>
            <person name="Sheng Y."/>
            <person name="Shibata Y."/>
            <person name="Shimada H."/>
            <person name="Shimada K."/>
            <person name="Silva D."/>
            <person name="Sinclair B."/>
            <person name="Sperling S."/>
            <person name="Stupka E."/>
            <person name="Sugiura K."/>
            <person name="Sultana R."/>
            <person name="Takenaka Y."/>
            <person name="Taki K."/>
            <person name="Tammoja K."/>
            <person name="Tan S.L."/>
            <person name="Tang S."/>
            <person name="Taylor M.S."/>
            <person name="Tegner J."/>
            <person name="Teichmann S.A."/>
            <person name="Ueda H.R."/>
            <person name="van Nimwegen E."/>
            <person name="Verardo R."/>
            <person name="Wei C.L."/>
            <person name="Yagi K."/>
            <person name="Yamanishi H."/>
            <person name="Zabarovsky E."/>
            <person name="Zhu S."/>
            <person name="Zimmer A."/>
            <person name="Hide W."/>
            <person name="Bult C."/>
            <person name="Grimmond S.M."/>
            <person name="Teasdale R.D."/>
            <person name="Liu E.T."/>
            <person name="Brusic V."/>
            <person name="Quackenbush J."/>
            <person name="Wahlestedt C."/>
            <person name="Mattick J.S."/>
            <person name="Hume D.A."/>
            <person name="Kai C."/>
            <person name="Sasaki D."/>
            <person name="Tomaru Y."/>
            <person name="Fukuda S."/>
            <person name="Kanamori-Katayama M."/>
            <person name="Suzuki M."/>
            <person name="Aoki J."/>
            <person name="Arakawa T."/>
            <person name="Iida J."/>
            <person name="Imamura K."/>
            <person name="Itoh M."/>
            <person name="Kato T."/>
            <person name="Kawaji H."/>
            <person name="Kawagashira N."/>
            <person name="Kawashima T."/>
            <person name="Kojima M."/>
            <person name="Kondo S."/>
            <person name="Konno H."/>
            <person name="Nakano K."/>
            <person name="Ninomiya N."/>
            <person name="Nishio T."/>
            <person name="Okada M."/>
            <person name="Plessy C."/>
            <person name="Shibata K."/>
            <person name="Shiraki T."/>
            <person name="Suzuki S."/>
            <person name="Tagami M."/>
            <person name="Waki K."/>
            <person name="Watahiki A."/>
            <person name="Okamura-Oho Y."/>
            <person name="Suzuki H."/>
            <person name="Kawai J."/>
            <person name="Hayashizaki Y."/>
        </authorList>
    </citation>
    <scope>NUCLEOTIDE SEQUENCE [LARGE SCALE MRNA]</scope>
    <source>
        <strain>C57BL/6J</strain>
        <tissue>Wolffian duct</tissue>
    </source>
</reference>
<reference key="3">
    <citation type="journal article" date="2004" name="Genome Res.">
        <title>The status, quality, and expansion of the NIH full-length cDNA project: the Mammalian Gene Collection (MGC).</title>
        <authorList>
            <consortium name="The MGC Project Team"/>
        </authorList>
    </citation>
    <scope>NUCLEOTIDE SEQUENCE [LARGE SCALE MRNA]</scope>
    <source>
        <strain>C57BL/6J</strain>
        <strain>FVB/N</strain>
        <tissue>Brain</tissue>
        <tissue>Colon</tissue>
    </source>
</reference>
<reference key="4">
    <citation type="journal article" date="2004" name="Mol. Cell. Proteomics">
        <title>Phosphoproteomic analysis of the developing mouse brain.</title>
        <authorList>
            <person name="Ballif B.A."/>
            <person name="Villen J."/>
            <person name="Beausoleil S.A."/>
            <person name="Schwartz D."/>
            <person name="Gygi S.P."/>
        </authorList>
    </citation>
    <scope>PHOSPHORYLATION [LARGE SCALE ANALYSIS] AT SER-63</scope>
    <scope>IDENTIFICATION BY MASS SPECTROMETRY [LARGE SCALE ANALYSIS]</scope>
    <source>
        <tissue>Embryonic brain</tissue>
    </source>
</reference>
<reference key="5">
    <citation type="journal article" date="2005" name="Development">
        <title>Congenital heart disease reminiscent of partial trisomy 2p syndrome in mice transgenic for the transcription factor Lbh.</title>
        <authorList>
            <person name="Briegel K.J."/>
            <person name="Baldwin H.S."/>
            <person name="Epstein J.A."/>
            <person name="Joyner A.L."/>
        </authorList>
    </citation>
    <scope>FUNCTION</scope>
</reference>
<reference key="6">
    <citation type="journal article" date="2010" name="Cell">
        <title>A tissue-specific atlas of mouse protein phosphorylation and expression.</title>
        <authorList>
            <person name="Huttlin E.L."/>
            <person name="Jedrychowski M.P."/>
            <person name="Elias J.E."/>
            <person name="Goswami T."/>
            <person name="Rad R."/>
            <person name="Beausoleil S.A."/>
            <person name="Villen J."/>
            <person name="Haas W."/>
            <person name="Sowa M.E."/>
            <person name="Gygi S.P."/>
        </authorList>
    </citation>
    <scope>PHOSPHORYLATION [LARGE SCALE ANALYSIS] AT SER-63</scope>
    <scope>IDENTIFICATION BY MASS SPECTROMETRY [LARGE SCALE ANALYSIS]</scope>
    <source>
        <tissue>Brain</tissue>
        <tissue>Heart</tissue>
        <tissue>Kidney</tissue>
        <tissue>Lung</tissue>
        <tissue>Pancreas</tissue>
        <tissue>Spleen</tissue>
    </source>
</reference>
<feature type="chain" id="PRO_0000324803" description="Protein LBH">
    <location>
        <begin position="1"/>
        <end position="105"/>
    </location>
</feature>
<feature type="domain" description="LBH" evidence="2">
    <location>
        <begin position="18"/>
        <end position="103"/>
    </location>
</feature>
<feature type="region of interest" description="Disordered" evidence="3">
    <location>
        <begin position="68"/>
        <end position="105"/>
    </location>
</feature>
<feature type="compositionally biased region" description="Acidic residues" evidence="3">
    <location>
        <begin position="86"/>
        <end position="98"/>
    </location>
</feature>
<feature type="modified residue" description="Phosphoserine" evidence="7 8">
    <location>
        <position position="63"/>
    </location>
</feature>
<feature type="sequence conflict" description="In Ref. 1; AAK38204." evidence="6" ref="1">
    <original>T</original>
    <variation>A</variation>
    <location>
        <position position="98"/>
    </location>
</feature>
<keyword id="KW-0963">Cytoplasm</keyword>
<keyword id="KW-0217">Developmental protein</keyword>
<keyword id="KW-0539">Nucleus</keyword>
<keyword id="KW-0597">Phosphoprotein</keyword>
<keyword id="KW-1185">Reference proteome</keyword>
<keyword id="KW-0804">Transcription</keyword>
<keyword id="KW-0805">Transcription regulation</keyword>
<dbReference type="EMBL" id="AF317517">
    <property type="protein sequence ID" value="AAK38204.1"/>
    <property type="molecule type" value="mRNA"/>
</dbReference>
<dbReference type="EMBL" id="AK020110">
    <property type="protein sequence ID" value="BAB31998.1"/>
    <property type="molecule type" value="mRNA"/>
</dbReference>
<dbReference type="EMBL" id="BC026827">
    <property type="protein sequence ID" value="AAH26827.1"/>
    <property type="molecule type" value="mRNA"/>
</dbReference>
<dbReference type="EMBL" id="BC052470">
    <property type="protein sequence ID" value="AAH52470.1"/>
    <property type="molecule type" value="mRNA"/>
</dbReference>
<dbReference type="CCDS" id="CCDS28964.1"/>
<dbReference type="RefSeq" id="NP_084275.3">
    <property type="nucleotide sequence ID" value="NM_029999.4"/>
</dbReference>
<dbReference type="BioGRID" id="218999">
    <property type="interactions" value="1"/>
</dbReference>
<dbReference type="FunCoup" id="Q9CX60">
    <property type="interactions" value="758"/>
</dbReference>
<dbReference type="STRING" id="10090.ENSMUSP00000024857"/>
<dbReference type="iPTMnet" id="Q9CX60"/>
<dbReference type="PhosphoSitePlus" id="Q9CX60"/>
<dbReference type="jPOST" id="Q9CX60"/>
<dbReference type="PaxDb" id="10090-ENSMUSP00000024857"/>
<dbReference type="PeptideAtlas" id="Q9CX60"/>
<dbReference type="ProteomicsDB" id="264980"/>
<dbReference type="Pumba" id="Q9CX60"/>
<dbReference type="Antibodypedia" id="28981">
    <property type="antibodies" value="85 antibodies from 15 providers"/>
</dbReference>
<dbReference type="DNASU" id="77889"/>
<dbReference type="Ensembl" id="ENSMUST00000024857.14">
    <property type="protein sequence ID" value="ENSMUSP00000024857.7"/>
    <property type="gene ID" value="ENSMUSG00000024063.14"/>
</dbReference>
<dbReference type="GeneID" id="77889"/>
<dbReference type="KEGG" id="mmu:77889"/>
<dbReference type="UCSC" id="uc008dng.2">
    <property type="organism name" value="mouse"/>
</dbReference>
<dbReference type="AGR" id="MGI:1925139"/>
<dbReference type="CTD" id="81606"/>
<dbReference type="MGI" id="MGI:1925139">
    <property type="gene designation" value="Lbh"/>
</dbReference>
<dbReference type="VEuPathDB" id="HostDB:ENSMUSG00000024063"/>
<dbReference type="eggNOG" id="ENOG502S1QG">
    <property type="taxonomic scope" value="Eukaryota"/>
</dbReference>
<dbReference type="GeneTree" id="ENSGT00390000009189"/>
<dbReference type="HOGENOM" id="CLU_161464_0_0_1"/>
<dbReference type="InParanoid" id="Q9CX60"/>
<dbReference type="OMA" id="VFFPIHC"/>
<dbReference type="OrthoDB" id="8937789at2759"/>
<dbReference type="PhylomeDB" id="Q9CX60"/>
<dbReference type="TreeFam" id="TF332770"/>
<dbReference type="BioGRID-ORCS" id="77889">
    <property type="hits" value="3 hits in 78 CRISPR screens"/>
</dbReference>
<dbReference type="ChiTaRS" id="Lbh">
    <property type="organism name" value="mouse"/>
</dbReference>
<dbReference type="PRO" id="PR:Q9CX60"/>
<dbReference type="Proteomes" id="UP000000589">
    <property type="component" value="Chromosome 17"/>
</dbReference>
<dbReference type="RNAct" id="Q9CX60">
    <property type="molecule type" value="protein"/>
</dbReference>
<dbReference type="Bgee" id="ENSMUSG00000024063">
    <property type="expression patterns" value="Expressed in ascending aorta and 232 other cell types or tissues"/>
</dbReference>
<dbReference type="ExpressionAtlas" id="Q9CX60">
    <property type="expression patterns" value="baseline and differential"/>
</dbReference>
<dbReference type="GO" id="GO:0005737">
    <property type="term" value="C:cytoplasm"/>
    <property type="evidence" value="ECO:0000250"/>
    <property type="project" value="UniProtKB"/>
</dbReference>
<dbReference type="GO" id="GO:0005634">
    <property type="term" value="C:nucleus"/>
    <property type="evidence" value="ECO:0000314"/>
    <property type="project" value="CACAO"/>
</dbReference>
<dbReference type="GO" id="GO:0032991">
    <property type="term" value="C:protein-containing complex"/>
    <property type="evidence" value="ECO:0000250"/>
    <property type="project" value="UniProtKB"/>
</dbReference>
<dbReference type="GO" id="GO:0030879">
    <property type="term" value="P:mammary gland development"/>
    <property type="evidence" value="ECO:0000315"/>
    <property type="project" value="CAFA"/>
</dbReference>
<dbReference type="GO" id="GO:0060644">
    <property type="term" value="P:mammary gland epithelial cell differentiation"/>
    <property type="evidence" value="ECO:0000315"/>
    <property type="project" value="CAFA"/>
</dbReference>
<dbReference type="GO" id="GO:0045892">
    <property type="term" value="P:negative regulation of DNA-templated transcription"/>
    <property type="evidence" value="ECO:0000250"/>
    <property type="project" value="UniProtKB"/>
</dbReference>
<dbReference type="GO" id="GO:0033147">
    <property type="term" value="P:negative regulation of intracellular estrogen receptor signaling pathway"/>
    <property type="evidence" value="ECO:0000315"/>
    <property type="project" value="CAFA"/>
</dbReference>
<dbReference type="GO" id="GO:2000737">
    <property type="term" value="P:negative regulation of stem cell differentiation"/>
    <property type="evidence" value="ECO:0000315"/>
    <property type="project" value="CAFA"/>
</dbReference>
<dbReference type="GO" id="GO:0045893">
    <property type="term" value="P:positive regulation of DNA-templated transcription"/>
    <property type="evidence" value="ECO:0000314"/>
    <property type="project" value="MGI"/>
</dbReference>
<dbReference type="GO" id="GO:2000103">
    <property type="term" value="P:positive regulation of mammary stem cell proliferation"/>
    <property type="evidence" value="ECO:0000315"/>
    <property type="project" value="CAFA"/>
</dbReference>
<dbReference type="GO" id="GO:1904677">
    <property type="term" value="P:positive regulation of somatic stem cell division"/>
    <property type="evidence" value="ECO:0000315"/>
    <property type="project" value="CAFA"/>
</dbReference>
<dbReference type="GO" id="GO:1904674">
    <property type="term" value="P:positive regulation of somatic stem cell population maintenance"/>
    <property type="evidence" value="ECO:0000315"/>
    <property type="project" value="CAFA"/>
</dbReference>
<dbReference type="GO" id="GO:0010468">
    <property type="term" value="P:regulation of gene expression"/>
    <property type="evidence" value="ECO:0000315"/>
    <property type="project" value="CAFA"/>
</dbReference>
<dbReference type="GO" id="GO:0043408">
    <property type="term" value="P:regulation of MAPK cascade"/>
    <property type="evidence" value="ECO:0000250"/>
    <property type="project" value="UniProtKB"/>
</dbReference>
<dbReference type="DisProt" id="DP00661"/>
<dbReference type="InterPro" id="IPR013294">
    <property type="entry name" value="LBH"/>
</dbReference>
<dbReference type="InterPro" id="IPR038990">
    <property type="entry name" value="LBH_dom"/>
</dbReference>
<dbReference type="InterPro" id="IPR042945">
    <property type="entry name" value="LBH_dom_prot"/>
</dbReference>
<dbReference type="PANTHER" id="PTHR14987:SF2">
    <property type="entry name" value="PROTEIN LBH"/>
    <property type="match status" value="1"/>
</dbReference>
<dbReference type="PANTHER" id="PTHR14987">
    <property type="entry name" value="PROTEIN LBH-RELATED"/>
    <property type="match status" value="1"/>
</dbReference>
<dbReference type="Pfam" id="PF15317">
    <property type="entry name" value="Lbh"/>
    <property type="match status" value="1"/>
</dbReference>
<dbReference type="PIRSF" id="PIRSF008130">
    <property type="entry name" value="LBH"/>
    <property type="match status" value="1"/>
</dbReference>
<dbReference type="PRINTS" id="PR01881">
    <property type="entry name" value="LBHPROTEIN"/>
</dbReference>
<comment type="function">
    <text evidence="4 5">Modulates the activity of key transcription factors involved in cardiogenesis.</text>
</comment>
<comment type="subcellular location">
    <subcellularLocation>
        <location evidence="4">Nucleus</location>
    </subcellularLocation>
    <subcellularLocation>
        <location evidence="1">Cytoplasm</location>
    </subcellularLocation>
</comment>
<comment type="tissue specificity">
    <text evidence="4">Expressed at highest levels in heart, and at lower levels in brain, spleen, lung, liver and kidney.</text>
</comment>
<comment type="developmental stage">
    <text evidence="4">First detected at 7.5 dpc in the mesendoderm that forms the anterior gut and the heart. At midgestation, expressed in the limb bud ectoderm and other specialized epithelia, as well as in the branchial arches and some neural crest derivatives. In the heart, expression initiates in the myocardial plate at the presomitic stage, with highest levels in the anterior myocardium. During heart chamber formation, expressed transiently in the right ventricle, atrioventricular canal and inflow tract. In the limb bud, expression is restricted to the ventral ectodermal compartment and the apical ectodermal ridge.</text>
</comment>
<comment type="miscellaneous">
    <text>Mice overexpressing Lbh in heart exhibit severe cardiac abnormalities and dysfunction.</text>
</comment>
<comment type="similarity">
    <text evidence="6">Belongs to the LBH family.</text>
</comment>
<gene>
    <name type="primary">Lbh</name>
</gene>
<organism>
    <name type="scientific">Mus musculus</name>
    <name type="common">Mouse</name>
    <dbReference type="NCBI Taxonomy" id="10090"/>
    <lineage>
        <taxon>Eukaryota</taxon>
        <taxon>Metazoa</taxon>
        <taxon>Chordata</taxon>
        <taxon>Craniata</taxon>
        <taxon>Vertebrata</taxon>
        <taxon>Euteleostomi</taxon>
        <taxon>Mammalia</taxon>
        <taxon>Eutheria</taxon>
        <taxon>Euarchontoglires</taxon>
        <taxon>Glires</taxon>
        <taxon>Rodentia</taxon>
        <taxon>Myomorpha</taxon>
        <taxon>Muroidea</taxon>
        <taxon>Muridae</taxon>
        <taxon>Murinae</taxon>
        <taxon>Mus</taxon>
        <taxon>Mus</taxon>
    </lineage>
</organism>
<protein>
    <recommendedName>
        <fullName>Protein LBH</fullName>
    </recommendedName>
    <alternativeName>
        <fullName>Limb bud and heart-expressed protein</fullName>
    </alternativeName>
</protein>
<proteinExistence type="evidence at protein level"/>
<evidence type="ECO:0000250" key="1"/>
<evidence type="ECO:0000255" key="2"/>
<evidence type="ECO:0000256" key="3">
    <source>
        <dbReference type="SAM" id="MobiDB-lite"/>
    </source>
</evidence>
<evidence type="ECO:0000269" key="4">
    <source>
    </source>
</evidence>
<evidence type="ECO:0000269" key="5">
    <source>
    </source>
</evidence>
<evidence type="ECO:0000305" key="6"/>
<evidence type="ECO:0007744" key="7">
    <source>
    </source>
</evidence>
<evidence type="ECO:0007744" key="8">
    <source>
    </source>
</evidence>